<gene>
    <name evidence="1" type="primary">infA</name>
    <name type="ordered locus">SPOA0077</name>
</gene>
<proteinExistence type="inferred from homology"/>
<dbReference type="EMBL" id="CP000032">
    <property type="protein sequence ID" value="AAV97216.1"/>
    <property type="molecule type" value="Genomic_DNA"/>
</dbReference>
<dbReference type="RefSeq" id="WP_005978431.1">
    <property type="nucleotide sequence ID" value="NC_006569.1"/>
</dbReference>
<dbReference type="SMR" id="Q5LLF0"/>
<dbReference type="PaxDb" id="246200-SPOA0077"/>
<dbReference type="GeneID" id="93913627"/>
<dbReference type="KEGG" id="sil:SPOA0077"/>
<dbReference type="eggNOG" id="COG0361">
    <property type="taxonomic scope" value="Bacteria"/>
</dbReference>
<dbReference type="HOGENOM" id="CLU_151267_1_0_5"/>
<dbReference type="OrthoDB" id="9803250at2"/>
<dbReference type="Proteomes" id="UP000001023">
    <property type="component" value="Plasmid megaplasmid"/>
</dbReference>
<dbReference type="GO" id="GO:0005829">
    <property type="term" value="C:cytosol"/>
    <property type="evidence" value="ECO:0007669"/>
    <property type="project" value="TreeGrafter"/>
</dbReference>
<dbReference type="GO" id="GO:0043022">
    <property type="term" value="F:ribosome binding"/>
    <property type="evidence" value="ECO:0007669"/>
    <property type="project" value="UniProtKB-UniRule"/>
</dbReference>
<dbReference type="GO" id="GO:0019843">
    <property type="term" value="F:rRNA binding"/>
    <property type="evidence" value="ECO:0007669"/>
    <property type="project" value="UniProtKB-UniRule"/>
</dbReference>
<dbReference type="GO" id="GO:0003743">
    <property type="term" value="F:translation initiation factor activity"/>
    <property type="evidence" value="ECO:0007669"/>
    <property type="project" value="UniProtKB-UniRule"/>
</dbReference>
<dbReference type="CDD" id="cd04451">
    <property type="entry name" value="S1_IF1"/>
    <property type="match status" value="1"/>
</dbReference>
<dbReference type="FunFam" id="2.40.50.140:FF:000002">
    <property type="entry name" value="Translation initiation factor IF-1"/>
    <property type="match status" value="1"/>
</dbReference>
<dbReference type="Gene3D" id="2.40.50.140">
    <property type="entry name" value="Nucleic acid-binding proteins"/>
    <property type="match status" value="1"/>
</dbReference>
<dbReference type="HAMAP" id="MF_00075">
    <property type="entry name" value="IF_1"/>
    <property type="match status" value="1"/>
</dbReference>
<dbReference type="InterPro" id="IPR012340">
    <property type="entry name" value="NA-bd_OB-fold"/>
</dbReference>
<dbReference type="InterPro" id="IPR006196">
    <property type="entry name" value="RNA-binding_domain_S1_IF1"/>
</dbReference>
<dbReference type="InterPro" id="IPR003029">
    <property type="entry name" value="S1_domain"/>
</dbReference>
<dbReference type="InterPro" id="IPR004368">
    <property type="entry name" value="TIF_IF1"/>
</dbReference>
<dbReference type="NCBIfam" id="TIGR00008">
    <property type="entry name" value="infA"/>
    <property type="match status" value="1"/>
</dbReference>
<dbReference type="PANTHER" id="PTHR33370">
    <property type="entry name" value="TRANSLATION INITIATION FACTOR IF-1, CHLOROPLASTIC"/>
    <property type="match status" value="1"/>
</dbReference>
<dbReference type="PANTHER" id="PTHR33370:SF1">
    <property type="entry name" value="TRANSLATION INITIATION FACTOR IF-1, CHLOROPLASTIC"/>
    <property type="match status" value="1"/>
</dbReference>
<dbReference type="Pfam" id="PF01176">
    <property type="entry name" value="eIF-1a"/>
    <property type="match status" value="1"/>
</dbReference>
<dbReference type="SMART" id="SM00316">
    <property type="entry name" value="S1"/>
    <property type="match status" value="1"/>
</dbReference>
<dbReference type="SUPFAM" id="SSF50249">
    <property type="entry name" value="Nucleic acid-binding proteins"/>
    <property type="match status" value="1"/>
</dbReference>
<dbReference type="PROSITE" id="PS50832">
    <property type="entry name" value="S1_IF1_TYPE"/>
    <property type="match status" value="1"/>
</dbReference>
<geneLocation type="plasmid">
    <name>megaplasmid Spo</name>
</geneLocation>
<reference key="1">
    <citation type="journal article" date="2004" name="Nature">
        <title>Genome sequence of Silicibacter pomeroyi reveals adaptations to the marine environment.</title>
        <authorList>
            <person name="Moran M.A."/>
            <person name="Buchan A."/>
            <person name="Gonzalez J.M."/>
            <person name="Heidelberg J.F."/>
            <person name="Whitman W.B."/>
            <person name="Kiene R.P."/>
            <person name="Henriksen J.R."/>
            <person name="King G.M."/>
            <person name="Belas R."/>
            <person name="Fuqua C."/>
            <person name="Brinkac L.M."/>
            <person name="Lewis M."/>
            <person name="Johri S."/>
            <person name="Weaver B."/>
            <person name="Pai G."/>
            <person name="Eisen J.A."/>
            <person name="Rahe E."/>
            <person name="Sheldon W.M."/>
            <person name="Ye W."/>
            <person name="Miller T.R."/>
            <person name="Carlton J."/>
            <person name="Rasko D.A."/>
            <person name="Paulsen I.T."/>
            <person name="Ren Q."/>
            <person name="Daugherty S.C."/>
            <person name="DeBoy R.T."/>
            <person name="Dodson R.J."/>
            <person name="Durkin A.S."/>
            <person name="Madupu R."/>
            <person name="Nelson W.C."/>
            <person name="Sullivan S.A."/>
            <person name="Rosovitz M.J."/>
            <person name="Haft D.H."/>
            <person name="Selengut J."/>
            <person name="Ward N."/>
        </authorList>
    </citation>
    <scope>NUCLEOTIDE SEQUENCE [LARGE SCALE GENOMIC DNA]</scope>
    <source>
        <strain>ATCC 700808 / DSM 15171 / DSS-3</strain>
    </source>
</reference>
<reference key="2">
    <citation type="journal article" date="2014" name="Stand. Genomic Sci.">
        <title>An updated genome annotation for the model marine bacterium Ruegeria pomeroyi DSS-3.</title>
        <authorList>
            <person name="Rivers A.R."/>
            <person name="Smith C.B."/>
            <person name="Moran M.A."/>
        </authorList>
    </citation>
    <scope>GENOME REANNOTATION</scope>
    <source>
        <strain>ATCC 700808 / DSM 15171 / DSS-3</strain>
    </source>
</reference>
<feature type="chain" id="PRO_0000095863" description="Translation initiation factor IF-1">
    <location>
        <begin position="1"/>
        <end position="72"/>
    </location>
</feature>
<feature type="domain" description="S1-like" evidence="1">
    <location>
        <begin position="1"/>
        <end position="72"/>
    </location>
</feature>
<keyword id="KW-0963">Cytoplasm</keyword>
<keyword id="KW-0396">Initiation factor</keyword>
<keyword id="KW-0614">Plasmid</keyword>
<keyword id="KW-0648">Protein biosynthesis</keyword>
<keyword id="KW-1185">Reference proteome</keyword>
<keyword id="KW-0694">RNA-binding</keyword>
<keyword id="KW-0699">rRNA-binding</keyword>
<accession>Q5LLF0</accession>
<protein>
    <recommendedName>
        <fullName evidence="1">Translation initiation factor IF-1</fullName>
    </recommendedName>
</protein>
<organism>
    <name type="scientific">Ruegeria pomeroyi (strain ATCC 700808 / DSM 15171 / DSS-3)</name>
    <name type="common">Silicibacter pomeroyi</name>
    <dbReference type="NCBI Taxonomy" id="246200"/>
    <lineage>
        <taxon>Bacteria</taxon>
        <taxon>Pseudomonadati</taxon>
        <taxon>Pseudomonadota</taxon>
        <taxon>Alphaproteobacteria</taxon>
        <taxon>Rhodobacterales</taxon>
        <taxon>Roseobacteraceae</taxon>
        <taxon>Ruegeria</taxon>
    </lineage>
</organism>
<name>IF1_RUEPO</name>
<evidence type="ECO:0000255" key="1">
    <source>
        <dbReference type="HAMAP-Rule" id="MF_00075"/>
    </source>
</evidence>
<comment type="function">
    <text evidence="1">One of the essential components for the initiation of protein synthesis. Stabilizes the binding of IF-2 and IF-3 on the 30S subunit to which N-formylmethionyl-tRNA(fMet) subsequently binds. Helps modulate mRNA selection, yielding the 30S pre-initiation complex (PIC). Upon addition of the 50S ribosomal subunit IF-1, IF-2 and IF-3 are released leaving the mature 70S translation initiation complex.</text>
</comment>
<comment type="subunit">
    <text evidence="1">Component of the 30S ribosomal translation pre-initiation complex which assembles on the 30S ribosome in the order IF-2 and IF-3, IF-1 and N-formylmethionyl-tRNA(fMet); mRNA recruitment can occur at any time during PIC assembly.</text>
</comment>
<comment type="subcellular location">
    <subcellularLocation>
        <location evidence="1">Cytoplasm</location>
    </subcellularLocation>
</comment>
<comment type="similarity">
    <text evidence="1">Belongs to the IF-1 family.</text>
</comment>
<sequence length="72" mass="8286">MAKEDTLEFPGVVKELLPNATFRVELENGHEIIAHTAGKMRKNRIRVLAGDKVQVEMTPYDLTKGRINYRFK</sequence>